<dbReference type="EMBL" id="AF198100">
    <property type="protein sequence ID" value="AAF44564.1"/>
    <property type="molecule type" value="Genomic_DNA"/>
</dbReference>
<dbReference type="RefSeq" id="NP_039183.1">
    <property type="nucleotide sequence ID" value="NC_002188.1"/>
</dbReference>
<dbReference type="SMR" id="Q9J515"/>
<dbReference type="GeneID" id="1486792"/>
<dbReference type="KEGG" id="vg:1486792"/>
<dbReference type="Proteomes" id="UP000008597">
    <property type="component" value="Segment"/>
</dbReference>
<accession>Q9J515</accession>
<sequence length="117" mass="13519">MIYTEFTILYKSSLPKYLRIMYFTSIGIFFHKLSIVSLEIVSSKTVNDLEIKLSLSFAVYTAFIIISLYMINSGNVTLLYNLSNIFDSILFRYISNRLLLPIFTSSIFNISFSHSNL</sequence>
<gene>
    <name type="ordered locus">FPV220</name>
</gene>
<organism>
    <name type="scientific">Fowlpox virus (strain NVSL)</name>
    <name type="common">FPV</name>
    <dbReference type="NCBI Taxonomy" id="928301"/>
    <lineage>
        <taxon>Viruses</taxon>
        <taxon>Varidnaviria</taxon>
        <taxon>Bamfordvirae</taxon>
        <taxon>Nucleocytoviricota</taxon>
        <taxon>Pokkesviricetes</taxon>
        <taxon>Chitovirales</taxon>
        <taxon>Poxviridae</taxon>
        <taxon>Chordopoxvirinae</taxon>
        <taxon>Avipoxvirus</taxon>
        <taxon>Fowlpox virus</taxon>
    </lineage>
</organism>
<proteinExistence type="predicted"/>
<keyword id="KW-1185">Reference proteome</keyword>
<name>V220_FOWPN</name>
<reference key="1">
    <citation type="journal article" date="2000" name="J. Virol.">
        <title>The genome of fowlpox virus.</title>
        <authorList>
            <person name="Afonso C.L."/>
            <person name="Tulman E.R."/>
            <person name="Lu Z."/>
            <person name="Zsak L."/>
            <person name="Kutish G.F."/>
            <person name="Rock D.L."/>
        </authorList>
    </citation>
    <scope>NUCLEOTIDE SEQUENCE [LARGE SCALE GENOMIC DNA]</scope>
</reference>
<feature type="chain" id="PRO_0000099731" description="Uncharacterized protein FPV220">
    <location>
        <begin position="1"/>
        <end position="117"/>
    </location>
</feature>
<protein>
    <recommendedName>
        <fullName>Uncharacterized protein FPV220</fullName>
    </recommendedName>
</protein>
<organismHost>
    <name type="scientific">Vertebrata</name>
    <dbReference type="NCBI Taxonomy" id="7742"/>
</organismHost>